<proteinExistence type="inferred from homology"/>
<accession>A0Q5D7</accession>
<name>SYR_FRATN</name>
<comment type="catalytic activity">
    <reaction evidence="1">
        <text>tRNA(Arg) + L-arginine + ATP = L-arginyl-tRNA(Arg) + AMP + diphosphate</text>
        <dbReference type="Rhea" id="RHEA:20301"/>
        <dbReference type="Rhea" id="RHEA-COMP:9658"/>
        <dbReference type="Rhea" id="RHEA-COMP:9673"/>
        <dbReference type="ChEBI" id="CHEBI:30616"/>
        <dbReference type="ChEBI" id="CHEBI:32682"/>
        <dbReference type="ChEBI" id="CHEBI:33019"/>
        <dbReference type="ChEBI" id="CHEBI:78442"/>
        <dbReference type="ChEBI" id="CHEBI:78513"/>
        <dbReference type="ChEBI" id="CHEBI:456215"/>
        <dbReference type="EC" id="6.1.1.19"/>
    </reaction>
</comment>
<comment type="subunit">
    <text evidence="1">Monomer.</text>
</comment>
<comment type="subcellular location">
    <subcellularLocation>
        <location evidence="1">Cytoplasm</location>
    </subcellularLocation>
</comment>
<comment type="similarity">
    <text evidence="1">Belongs to the class-I aminoacyl-tRNA synthetase family.</text>
</comment>
<keyword id="KW-0030">Aminoacyl-tRNA synthetase</keyword>
<keyword id="KW-0067">ATP-binding</keyword>
<keyword id="KW-0963">Cytoplasm</keyword>
<keyword id="KW-0436">Ligase</keyword>
<keyword id="KW-0547">Nucleotide-binding</keyword>
<keyword id="KW-0648">Protein biosynthesis</keyword>
<evidence type="ECO:0000255" key="1">
    <source>
        <dbReference type="HAMAP-Rule" id="MF_00123"/>
    </source>
</evidence>
<protein>
    <recommendedName>
        <fullName evidence="1">Arginine--tRNA ligase</fullName>
        <ecNumber evidence="1">6.1.1.19</ecNumber>
    </recommendedName>
    <alternativeName>
        <fullName evidence="1">Arginyl-tRNA synthetase</fullName>
        <shortName evidence="1">ArgRS</shortName>
    </alternativeName>
</protein>
<reference key="1">
    <citation type="journal article" date="2007" name="Genome Biol.">
        <title>Comparison of Francisella tularensis genomes reveals evolutionary events associated with the emergence of human pathogenic strains.</title>
        <authorList>
            <person name="Rohmer L."/>
            <person name="Fong C."/>
            <person name="Abmayr S."/>
            <person name="Wasnick M."/>
            <person name="Larson Freeman T.J."/>
            <person name="Radey M."/>
            <person name="Guina T."/>
            <person name="Svensson K."/>
            <person name="Hayden H.S."/>
            <person name="Jacobs M."/>
            <person name="Gallagher L.A."/>
            <person name="Manoil C."/>
            <person name="Ernst R.K."/>
            <person name="Drees B."/>
            <person name="Buckley D."/>
            <person name="Haugen E."/>
            <person name="Bovee D."/>
            <person name="Zhou Y."/>
            <person name="Chang J."/>
            <person name="Levy R."/>
            <person name="Lim R."/>
            <person name="Gillett W."/>
            <person name="Guenthener D."/>
            <person name="Kang A."/>
            <person name="Shaffer S.A."/>
            <person name="Taylor G."/>
            <person name="Chen J."/>
            <person name="Gallis B."/>
            <person name="D'Argenio D.A."/>
            <person name="Forsman M."/>
            <person name="Olson M.V."/>
            <person name="Goodlett D.R."/>
            <person name="Kaul R."/>
            <person name="Miller S.I."/>
            <person name="Brittnacher M.J."/>
        </authorList>
    </citation>
    <scope>NUCLEOTIDE SEQUENCE [LARGE SCALE GENOMIC DNA]</scope>
    <source>
        <strain>U112</strain>
    </source>
</reference>
<dbReference type="EC" id="6.1.1.19" evidence="1"/>
<dbReference type="EMBL" id="CP000439">
    <property type="protein sequence ID" value="ABK89452.1"/>
    <property type="molecule type" value="Genomic_DNA"/>
</dbReference>
<dbReference type="RefSeq" id="WP_003033328.1">
    <property type="nucleotide sequence ID" value="NZ_CP009633.1"/>
</dbReference>
<dbReference type="SMR" id="A0Q5D7"/>
<dbReference type="GeneID" id="75263957"/>
<dbReference type="KEGG" id="ftn:FTN_0557"/>
<dbReference type="KEGG" id="ftx:AW25_1472"/>
<dbReference type="BioCyc" id="FTUL401614:G1G75-579-MONOMER"/>
<dbReference type="Proteomes" id="UP000000762">
    <property type="component" value="Chromosome"/>
</dbReference>
<dbReference type="GO" id="GO:0005737">
    <property type="term" value="C:cytoplasm"/>
    <property type="evidence" value="ECO:0007669"/>
    <property type="project" value="UniProtKB-SubCell"/>
</dbReference>
<dbReference type="GO" id="GO:0004814">
    <property type="term" value="F:arginine-tRNA ligase activity"/>
    <property type="evidence" value="ECO:0007669"/>
    <property type="project" value="UniProtKB-UniRule"/>
</dbReference>
<dbReference type="GO" id="GO:0005524">
    <property type="term" value="F:ATP binding"/>
    <property type="evidence" value="ECO:0007669"/>
    <property type="project" value="UniProtKB-UniRule"/>
</dbReference>
<dbReference type="GO" id="GO:0006420">
    <property type="term" value="P:arginyl-tRNA aminoacylation"/>
    <property type="evidence" value="ECO:0007669"/>
    <property type="project" value="UniProtKB-UniRule"/>
</dbReference>
<dbReference type="CDD" id="cd00671">
    <property type="entry name" value="ArgRS_core"/>
    <property type="match status" value="1"/>
</dbReference>
<dbReference type="Gene3D" id="3.30.1360.70">
    <property type="entry name" value="Arginyl tRNA synthetase N-terminal domain"/>
    <property type="match status" value="1"/>
</dbReference>
<dbReference type="Gene3D" id="3.40.50.620">
    <property type="entry name" value="HUPs"/>
    <property type="match status" value="1"/>
</dbReference>
<dbReference type="Gene3D" id="1.10.730.10">
    <property type="entry name" value="Isoleucyl-tRNA Synthetase, Domain 1"/>
    <property type="match status" value="1"/>
</dbReference>
<dbReference type="HAMAP" id="MF_00123">
    <property type="entry name" value="Arg_tRNA_synth"/>
    <property type="match status" value="1"/>
</dbReference>
<dbReference type="InterPro" id="IPR001412">
    <property type="entry name" value="aa-tRNA-synth_I_CS"/>
</dbReference>
<dbReference type="InterPro" id="IPR001278">
    <property type="entry name" value="Arg-tRNA-ligase"/>
</dbReference>
<dbReference type="InterPro" id="IPR005148">
    <property type="entry name" value="Arg-tRNA-synth_N"/>
</dbReference>
<dbReference type="InterPro" id="IPR036695">
    <property type="entry name" value="Arg-tRNA-synth_N_sf"/>
</dbReference>
<dbReference type="InterPro" id="IPR035684">
    <property type="entry name" value="ArgRS_core"/>
</dbReference>
<dbReference type="InterPro" id="IPR008909">
    <property type="entry name" value="DALR_anticod-bd"/>
</dbReference>
<dbReference type="InterPro" id="IPR014729">
    <property type="entry name" value="Rossmann-like_a/b/a_fold"/>
</dbReference>
<dbReference type="InterPro" id="IPR009080">
    <property type="entry name" value="tRNAsynth_Ia_anticodon-bd"/>
</dbReference>
<dbReference type="NCBIfam" id="TIGR00456">
    <property type="entry name" value="argS"/>
    <property type="match status" value="1"/>
</dbReference>
<dbReference type="PANTHER" id="PTHR11956:SF5">
    <property type="entry name" value="ARGININE--TRNA LIGASE, CYTOPLASMIC"/>
    <property type="match status" value="1"/>
</dbReference>
<dbReference type="PANTHER" id="PTHR11956">
    <property type="entry name" value="ARGINYL-TRNA SYNTHETASE"/>
    <property type="match status" value="1"/>
</dbReference>
<dbReference type="Pfam" id="PF03485">
    <property type="entry name" value="Arg_tRNA_synt_N"/>
    <property type="match status" value="1"/>
</dbReference>
<dbReference type="Pfam" id="PF05746">
    <property type="entry name" value="DALR_1"/>
    <property type="match status" value="1"/>
</dbReference>
<dbReference type="Pfam" id="PF00750">
    <property type="entry name" value="tRNA-synt_1d"/>
    <property type="match status" value="1"/>
</dbReference>
<dbReference type="PRINTS" id="PR01038">
    <property type="entry name" value="TRNASYNTHARG"/>
</dbReference>
<dbReference type="SMART" id="SM01016">
    <property type="entry name" value="Arg_tRNA_synt_N"/>
    <property type="match status" value="1"/>
</dbReference>
<dbReference type="SMART" id="SM00836">
    <property type="entry name" value="DALR_1"/>
    <property type="match status" value="1"/>
</dbReference>
<dbReference type="SUPFAM" id="SSF47323">
    <property type="entry name" value="Anticodon-binding domain of a subclass of class I aminoacyl-tRNA synthetases"/>
    <property type="match status" value="1"/>
</dbReference>
<dbReference type="SUPFAM" id="SSF55190">
    <property type="entry name" value="Arginyl-tRNA synthetase (ArgRS), N-terminal 'additional' domain"/>
    <property type="match status" value="1"/>
</dbReference>
<dbReference type="SUPFAM" id="SSF52374">
    <property type="entry name" value="Nucleotidylyl transferase"/>
    <property type="match status" value="1"/>
</dbReference>
<dbReference type="PROSITE" id="PS00178">
    <property type="entry name" value="AA_TRNA_LIGASE_I"/>
    <property type="match status" value="1"/>
</dbReference>
<organism>
    <name type="scientific">Francisella tularensis subsp. novicida (strain U112)</name>
    <dbReference type="NCBI Taxonomy" id="401614"/>
    <lineage>
        <taxon>Bacteria</taxon>
        <taxon>Pseudomonadati</taxon>
        <taxon>Pseudomonadota</taxon>
        <taxon>Gammaproteobacteria</taxon>
        <taxon>Thiotrichales</taxon>
        <taxon>Francisellaceae</taxon>
        <taxon>Francisella</taxon>
    </lineage>
</organism>
<feature type="chain" id="PRO_1000018031" description="Arginine--tRNA ligase">
    <location>
        <begin position="1"/>
        <end position="581"/>
    </location>
</feature>
<feature type="short sequence motif" description="'HIGH' region">
    <location>
        <begin position="122"/>
        <end position="132"/>
    </location>
</feature>
<gene>
    <name evidence="1" type="primary">argS</name>
    <name type="ordered locus">FTN_0557</name>
</gene>
<sequence>MNIENYLSETLAKVFQKLGYAESFAKVVTSTREDVGHFQCNGAMPLAKFAKKPPLAIAEEIVEHIDAEDIFAKLEVAKPGFINITLAPKFLADTTNRFLNSNKFGVQNNLPNRKVVLDFGGPNVAKPMHVGHIRSALLGDALQRIHRFCGDTVVSDVHLGDWGTQMGMLIEEIKLQSPQLVYFDENYTGEYPTESPVTVQELAEIYPRASKRCKSDINEMEKARLATFELQQGRRGYVALWQHFVRISIDAVKKDFDSLDVHFDLWLGESDANKFIDEMISYFQANNFIYEDEGAWVIDTNKDGVPPLIVIKKDGGVMYGTTDLATLWQRSKDLDPDEIIYVVDKRQSLHFKQVFSVAERTKVVSEKCKLKHVAFGTVNGKDGRPFKTREGGVMHLADLISQAKEYAKNRMPDENDDSIIDQIAMATIKFGDLINNYANDYFFDLEKFAQHEGKTGPYLLYTAVRAKSILRKIFGDNYDIKSLAKDYKVVNAHNEYEEKLQLQLIQFPIAVQRAYENSQPHHICEYAYSLANSFNKFYVNCPITNLDDESLKKARIALCMATVKAMTIASDLIGISIPERM</sequence>